<protein>
    <recommendedName>
        <fullName evidence="1">Putative methylthioribose-1-phosphate isomerase</fullName>
        <shortName evidence="1">M1Pi</shortName>
        <shortName evidence="1">MTR-1-P isomerase</shortName>
        <ecNumber evidence="1">5.3.1.23</ecNumber>
    </recommendedName>
    <alternativeName>
        <fullName evidence="1">MTNA-like protein</fullName>
        <shortName evidence="1">aMTNA</shortName>
    </alternativeName>
    <alternativeName>
        <fullName evidence="1">S-methyl-5-thioribose-1-phosphate isomerase</fullName>
    </alternativeName>
</protein>
<reference key="1">
    <citation type="journal article" date="1999" name="Genetics">
        <title>Divergence of the hyperthermophilic archaea Pyrococcus furiosus and P. horikoshii inferred from complete genomic sequences.</title>
        <authorList>
            <person name="Maeder D.L."/>
            <person name="Weiss R.B."/>
            <person name="Dunn D.M."/>
            <person name="Cherry J.L."/>
            <person name="Gonzalez J.M."/>
            <person name="DiRuggiero J."/>
            <person name="Robb F.T."/>
        </authorList>
    </citation>
    <scope>NUCLEOTIDE SEQUENCE [LARGE SCALE GENOMIC DNA]</scope>
    <source>
        <strain>ATCC 43587 / DSM 3638 / JCM 8422 / Vc1</strain>
    </source>
</reference>
<comment type="function">
    <text evidence="1">Catalyzes the interconversion of methylthioribose-1-phosphate (MTR-1-P) into methylthioribulose-1-phosphate (MTRu-1-P).</text>
</comment>
<comment type="catalytic activity">
    <reaction evidence="1">
        <text>5-(methylsulfanyl)-alpha-D-ribose 1-phosphate = 5-(methylsulfanyl)-D-ribulose 1-phosphate</text>
        <dbReference type="Rhea" id="RHEA:19989"/>
        <dbReference type="ChEBI" id="CHEBI:58533"/>
        <dbReference type="ChEBI" id="CHEBI:58548"/>
        <dbReference type="EC" id="5.3.1.23"/>
    </reaction>
</comment>
<comment type="similarity">
    <text evidence="2">Belongs to the eIF-2B alpha/beta/delta subunits family. MtnA subfamily.</text>
</comment>
<accession>Q8U178</accession>
<evidence type="ECO:0000255" key="1">
    <source>
        <dbReference type="HAMAP-Rule" id="MF_01678"/>
    </source>
</evidence>
<evidence type="ECO:0000305" key="2"/>
<keyword id="KW-0028">Amino-acid biosynthesis</keyword>
<keyword id="KW-0413">Isomerase</keyword>
<keyword id="KW-0486">Methionine biosynthesis</keyword>
<keyword id="KW-1185">Reference proteome</keyword>
<dbReference type="EC" id="5.3.1.23" evidence="1"/>
<dbReference type="EMBL" id="AE009950">
    <property type="protein sequence ID" value="AAL81473.1"/>
    <property type="molecule type" value="Genomic_DNA"/>
</dbReference>
<dbReference type="SMR" id="Q8U178"/>
<dbReference type="STRING" id="186497.PF1349"/>
<dbReference type="PaxDb" id="186497-PF1349"/>
<dbReference type="KEGG" id="pfu:PF1349"/>
<dbReference type="PATRIC" id="fig|186497.12.peg.1412"/>
<dbReference type="eggNOG" id="arCOG01123">
    <property type="taxonomic scope" value="Archaea"/>
</dbReference>
<dbReference type="HOGENOM" id="CLU_016218_1_2_2"/>
<dbReference type="OrthoDB" id="45195at2157"/>
<dbReference type="PhylomeDB" id="Q8U178"/>
<dbReference type="Proteomes" id="UP000001013">
    <property type="component" value="Chromosome"/>
</dbReference>
<dbReference type="GO" id="GO:0046523">
    <property type="term" value="F:S-methyl-5-thioribose-1-phosphate isomerase activity"/>
    <property type="evidence" value="ECO:0007669"/>
    <property type="project" value="UniProtKB-UniRule"/>
</dbReference>
<dbReference type="GO" id="GO:0019509">
    <property type="term" value="P:L-methionine salvage from methylthioadenosine"/>
    <property type="evidence" value="ECO:0007669"/>
    <property type="project" value="UniProtKB-UniRule"/>
</dbReference>
<dbReference type="FunFam" id="1.20.120.420:FF:000001">
    <property type="entry name" value="Methylthioribose-1-phosphate isomerase"/>
    <property type="match status" value="1"/>
</dbReference>
<dbReference type="FunFam" id="3.40.50.10470:FF:000006">
    <property type="entry name" value="Methylthioribose-1-phosphate isomerase"/>
    <property type="match status" value="1"/>
</dbReference>
<dbReference type="Gene3D" id="1.20.120.420">
    <property type="entry name" value="translation initiation factor eif-2b, domain 1"/>
    <property type="match status" value="1"/>
</dbReference>
<dbReference type="Gene3D" id="3.40.50.10470">
    <property type="entry name" value="Translation initiation factor eif-2b, domain 2"/>
    <property type="match status" value="1"/>
</dbReference>
<dbReference type="HAMAP" id="MF_01678">
    <property type="entry name" value="Salvage_MtnA"/>
    <property type="match status" value="1"/>
</dbReference>
<dbReference type="InterPro" id="IPR000649">
    <property type="entry name" value="IF-2B-related"/>
</dbReference>
<dbReference type="InterPro" id="IPR005251">
    <property type="entry name" value="IF-M1Pi"/>
</dbReference>
<dbReference type="InterPro" id="IPR042529">
    <property type="entry name" value="IF_2B-like_C"/>
</dbReference>
<dbReference type="InterPro" id="IPR011559">
    <property type="entry name" value="Initiation_fac_2B_a/b/d"/>
</dbReference>
<dbReference type="InterPro" id="IPR027363">
    <property type="entry name" value="M1Pi_N"/>
</dbReference>
<dbReference type="InterPro" id="IPR037171">
    <property type="entry name" value="NagB/RpiA_transferase-like"/>
</dbReference>
<dbReference type="NCBIfam" id="TIGR00524">
    <property type="entry name" value="eIF-2B_rel"/>
    <property type="match status" value="1"/>
</dbReference>
<dbReference type="NCBIfam" id="NF004326">
    <property type="entry name" value="PRK05720.1"/>
    <property type="match status" value="1"/>
</dbReference>
<dbReference type="NCBIfam" id="TIGR00512">
    <property type="entry name" value="salvage_mtnA"/>
    <property type="match status" value="1"/>
</dbReference>
<dbReference type="PANTHER" id="PTHR43475">
    <property type="entry name" value="METHYLTHIORIBOSE-1-PHOSPHATE ISOMERASE"/>
    <property type="match status" value="1"/>
</dbReference>
<dbReference type="PANTHER" id="PTHR43475:SF1">
    <property type="entry name" value="METHYLTHIORIBOSE-1-PHOSPHATE ISOMERASE"/>
    <property type="match status" value="1"/>
</dbReference>
<dbReference type="Pfam" id="PF01008">
    <property type="entry name" value="IF-2B"/>
    <property type="match status" value="1"/>
</dbReference>
<dbReference type="SUPFAM" id="SSF100950">
    <property type="entry name" value="NagB/RpiA/CoA transferase-like"/>
    <property type="match status" value="1"/>
</dbReference>
<proteinExistence type="inferred from homology"/>
<name>MTNA_PYRFU</name>
<organism>
    <name type="scientific">Pyrococcus furiosus (strain ATCC 43587 / DSM 3638 / JCM 8422 / Vc1)</name>
    <dbReference type="NCBI Taxonomy" id="186497"/>
    <lineage>
        <taxon>Archaea</taxon>
        <taxon>Methanobacteriati</taxon>
        <taxon>Methanobacteriota</taxon>
        <taxon>Thermococci</taxon>
        <taxon>Thermococcales</taxon>
        <taxon>Thermococcaceae</taxon>
        <taxon>Pyrococcus</taxon>
    </lineage>
</organism>
<gene>
    <name type="ordered locus">PF1349</name>
</gene>
<feature type="chain" id="PRO_0000156089" description="Putative methylthioribose-1-phosphate isomerase">
    <location>
        <begin position="1"/>
        <end position="356"/>
    </location>
</feature>
<feature type="active site" description="Proton donor" evidence="1">
    <location>
        <position position="247"/>
    </location>
</feature>
<feature type="binding site" evidence="1">
    <location>
        <begin position="57"/>
        <end position="59"/>
    </location>
    <ligand>
        <name>substrate</name>
    </ligand>
</feature>
<feature type="binding site" evidence="1">
    <location>
        <position position="100"/>
    </location>
    <ligand>
        <name>substrate</name>
    </ligand>
</feature>
<feature type="binding site" evidence="1">
    <location>
        <position position="206"/>
    </location>
    <ligand>
        <name>substrate</name>
    </ligand>
</feature>
<feature type="binding site" evidence="1">
    <location>
        <begin position="257"/>
        <end position="258"/>
    </location>
    <ligand>
        <name>substrate</name>
    </ligand>
</feature>
<feature type="site" description="Transition state stabilizer" evidence="1">
    <location>
        <position position="167"/>
    </location>
</feature>
<sequence length="356" mass="39657">MEIKYRPEELTKLPRSVEYREGKVYMINQRLLPREFKVEEFTTVEAVAEAIKNMTVRGAPAIGAAAAFGLALYAETSKAKTKDEFFDGFYRAYETLKNTRPTAVNLFWALNRIKKLVEEHREDSLDEIKRLIVEEAQKIADEDVEANLRMGHYGAEVLPEGNILTHCNAGSLATVHLGTVGAVVRVMHKEGTLKLLWLDETRPVLQGARLSAWEYSYDGLNVKLIADNAAAFVMQQGKVDAIIVGADRIVANGDFANKIGTYMLAVLAKEHGIPFFTVAPLSSIDMSLSSGKEIPIEERSPEEVLTCGGCRIAPDVPVYNPAFDVTPHKYLTGIITDRGVVWPPFKRNLKKLFETL</sequence>